<gene>
    <name evidence="2" type="primary">fig</name>
    <name type="ORF">GL23811</name>
</gene>
<organism>
    <name type="scientific">Drosophila persimilis</name>
    <name type="common">Fruit fly</name>
    <dbReference type="NCBI Taxonomy" id="7234"/>
    <lineage>
        <taxon>Eukaryota</taxon>
        <taxon>Metazoa</taxon>
        <taxon>Ecdysozoa</taxon>
        <taxon>Arthropoda</taxon>
        <taxon>Hexapoda</taxon>
        <taxon>Insecta</taxon>
        <taxon>Pterygota</taxon>
        <taxon>Neoptera</taxon>
        <taxon>Endopterygota</taxon>
        <taxon>Diptera</taxon>
        <taxon>Brachycera</taxon>
        <taxon>Muscomorpha</taxon>
        <taxon>Ephydroidea</taxon>
        <taxon>Drosophilidae</taxon>
        <taxon>Drosophila</taxon>
        <taxon>Sophophora</taxon>
    </lineage>
</organism>
<reference evidence="7" key="1">
    <citation type="journal article" date="2007" name="Nature">
        <title>Evolution of genes and genomes on the Drosophila phylogeny.</title>
        <authorList>
            <consortium name="Drosophila 12 genomes consortium"/>
        </authorList>
    </citation>
    <scope>NUCLEOTIDE SEQUENCE [LARGE SCALE GENOMIC DNA]</scope>
    <source>
        <strain>MSH-3 / Tucson 14011-0111.49</strain>
    </source>
</reference>
<comment type="catalytic activity">
    <reaction>
        <text>O-phospho-L-seryl-[protein] + H2O = L-seryl-[protein] + phosphate</text>
        <dbReference type="Rhea" id="RHEA:20629"/>
        <dbReference type="Rhea" id="RHEA-COMP:9863"/>
        <dbReference type="Rhea" id="RHEA-COMP:11604"/>
        <dbReference type="ChEBI" id="CHEBI:15377"/>
        <dbReference type="ChEBI" id="CHEBI:29999"/>
        <dbReference type="ChEBI" id="CHEBI:43474"/>
        <dbReference type="ChEBI" id="CHEBI:83421"/>
        <dbReference type="EC" id="3.1.3.16"/>
    </reaction>
</comment>
<comment type="catalytic activity">
    <reaction>
        <text>O-phospho-L-threonyl-[protein] + H2O = L-threonyl-[protein] + phosphate</text>
        <dbReference type="Rhea" id="RHEA:47004"/>
        <dbReference type="Rhea" id="RHEA-COMP:11060"/>
        <dbReference type="Rhea" id="RHEA-COMP:11605"/>
        <dbReference type="ChEBI" id="CHEBI:15377"/>
        <dbReference type="ChEBI" id="CHEBI:30013"/>
        <dbReference type="ChEBI" id="CHEBI:43474"/>
        <dbReference type="ChEBI" id="CHEBI:61977"/>
        <dbReference type="EC" id="3.1.3.16"/>
    </reaction>
</comment>
<comment type="cofactor">
    <cofactor evidence="1 6">
        <name>Mg(2+)</name>
        <dbReference type="ChEBI" id="CHEBI:18420"/>
    </cofactor>
    <cofactor evidence="1 6">
        <name>Mn(2+)</name>
        <dbReference type="ChEBI" id="CHEBI:29035"/>
    </cofactor>
</comment>
<comment type="similarity">
    <text evidence="3">Belongs to the PP2C family.</text>
</comment>
<evidence type="ECO:0000250" key="1">
    <source>
        <dbReference type="UniProtKB" id="P35813"/>
    </source>
</evidence>
<evidence type="ECO:0000250" key="2">
    <source>
        <dbReference type="UniProtKB" id="Q9VAH4"/>
    </source>
</evidence>
<evidence type="ECO:0000255" key="3"/>
<evidence type="ECO:0000255" key="4">
    <source>
        <dbReference type="PROSITE-ProRule" id="PRU01082"/>
    </source>
</evidence>
<evidence type="ECO:0000256" key="5">
    <source>
        <dbReference type="SAM" id="MobiDB-lite"/>
    </source>
</evidence>
<evidence type="ECO:0000305" key="6"/>
<evidence type="ECO:0000312" key="7">
    <source>
        <dbReference type="EMBL" id="EDW23812.1"/>
    </source>
</evidence>
<accession>B4G653</accession>
<proteinExistence type="inferred from homology"/>
<dbReference type="EC" id="3.1.3.16"/>
<dbReference type="EMBL" id="CH479179">
    <property type="protein sequence ID" value="EDW23812.1"/>
    <property type="molecule type" value="Genomic_DNA"/>
</dbReference>
<dbReference type="RefSeq" id="XP_002012826.1">
    <property type="nucleotide sequence ID" value="XM_002012790.1"/>
</dbReference>
<dbReference type="SMR" id="B4G653"/>
<dbReference type="STRING" id="7234.B4G653"/>
<dbReference type="EnsemblMetazoa" id="FBtr0189426">
    <property type="protein sequence ID" value="FBpp0187918"/>
    <property type="gene ID" value="FBgn0161401"/>
</dbReference>
<dbReference type="GeneID" id="6587930"/>
<dbReference type="KEGG" id="dpe:6587930"/>
<dbReference type="CTD" id="43511"/>
<dbReference type="eggNOG" id="KOG1379">
    <property type="taxonomic scope" value="Eukaryota"/>
</dbReference>
<dbReference type="HOGENOM" id="CLU_029404_3_0_1"/>
<dbReference type="OMA" id="DSWFVSS"/>
<dbReference type="OrthoDB" id="60843at2759"/>
<dbReference type="PhylomeDB" id="B4G653"/>
<dbReference type="Proteomes" id="UP000008744">
    <property type="component" value="Unassembled WGS sequence"/>
</dbReference>
<dbReference type="GO" id="GO:0005739">
    <property type="term" value="C:mitochondrion"/>
    <property type="evidence" value="ECO:0007669"/>
    <property type="project" value="TreeGrafter"/>
</dbReference>
<dbReference type="GO" id="GO:0046872">
    <property type="term" value="F:metal ion binding"/>
    <property type="evidence" value="ECO:0007669"/>
    <property type="project" value="UniProtKB-KW"/>
</dbReference>
<dbReference type="GO" id="GO:0004722">
    <property type="term" value="F:protein serine/threonine phosphatase activity"/>
    <property type="evidence" value="ECO:0000250"/>
    <property type="project" value="UniProtKB"/>
</dbReference>
<dbReference type="GO" id="GO:0016311">
    <property type="term" value="P:dephosphorylation"/>
    <property type="evidence" value="ECO:0000250"/>
    <property type="project" value="UniProtKB"/>
</dbReference>
<dbReference type="Gene3D" id="3.60.40.10">
    <property type="entry name" value="PPM-type phosphatase domain"/>
    <property type="match status" value="1"/>
</dbReference>
<dbReference type="InterPro" id="IPR036457">
    <property type="entry name" value="PPM-type-like_dom_sf"/>
</dbReference>
<dbReference type="InterPro" id="IPR001932">
    <property type="entry name" value="PPM-type_phosphatase-like_dom"/>
</dbReference>
<dbReference type="InterPro" id="IPR039123">
    <property type="entry name" value="PPTC7"/>
</dbReference>
<dbReference type="PANTHER" id="PTHR12320">
    <property type="entry name" value="PROTEIN PHOSPHATASE 2C"/>
    <property type="match status" value="1"/>
</dbReference>
<dbReference type="PANTHER" id="PTHR12320:SF1">
    <property type="entry name" value="PROTEIN PHOSPHATASE PTC7 HOMOLOG"/>
    <property type="match status" value="1"/>
</dbReference>
<dbReference type="Pfam" id="PF07228">
    <property type="entry name" value="SpoIIE"/>
    <property type="match status" value="1"/>
</dbReference>
<dbReference type="SMART" id="SM00331">
    <property type="entry name" value="PP2C_SIG"/>
    <property type="match status" value="1"/>
</dbReference>
<dbReference type="SMART" id="SM00332">
    <property type="entry name" value="PP2Cc"/>
    <property type="match status" value="1"/>
</dbReference>
<dbReference type="SUPFAM" id="SSF81606">
    <property type="entry name" value="PP2C-like"/>
    <property type="match status" value="1"/>
</dbReference>
<dbReference type="PROSITE" id="PS51746">
    <property type="entry name" value="PPM_2"/>
    <property type="match status" value="1"/>
</dbReference>
<keyword id="KW-0378">Hydrolase</keyword>
<keyword id="KW-0460">Magnesium</keyword>
<keyword id="KW-0464">Manganese</keyword>
<keyword id="KW-0479">Metal-binding</keyword>
<keyword id="KW-0904">Protein phosphatase</keyword>
<keyword id="KW-1185">Reference proteome</keyword>
<name>PTC71_DROPE</name>
<sequence>MAFMRSKPSLGSLARVAFRWCGPGVGLVSYSQEPYLVKAVQGKSKPRSPHLTSPQCSPEHRPRRFRPPSASGRTAFSSAPRPKADVMGVADGVGGWRDRGIDARALLPGSDRCFVHAQKPTFDARNPRQLLSECYGEMKRKWKPILGSSTACVVAFNRSESALYTANLGDSGYVVIRNGSVLDRSEEQTHFFNMPFQLTVPPPDSNREMWFCDDPSEAVATRLLLQPDDLVLVATDGLFDNMPEQMLLEMLSKVQGVHEQKAIQEAVNRVVERAGALSINPIYKSPFCLRALENNVPYGGGGKPDDITVVLASVAMTPVQYRGGFQ</sequence>
<protein>
    <recommendedName>
        <fullName>Protein phosphatase PTC7 homolog fig</fullName>
    </recommendedName>
    <alternativeName>
        <fullName>Fos intronic gene protein</fullName>
        <ecNumber>3.1.3.16</ecNumber>
    </alternativeName>
</protein>
<feature type="chain" id="PRO_0000377400" description="Protein phosphatase PTC7 homolog fig">
    <location>
        <begin position="1"/>
        <end position="326"/>
    </location>
</feature>
<feature type="domain" description="PPM-type phosphatase" evidence="4">
    <location>
        <begin position="64"/>
        <end position="314"/>
    </location>
</feature>
<feature type="region of interest" description="Disordered" evidence="5">
    <location>
        <begin position="40"/>
        <end position="83"/>
    </location>
</feature>
<feature type="binding site" evidence="1">
    <location>
        <position position="91"/>
    </location>
    <ligand>
        <name>Mn(2+)</name>
        <dbReference type="ChEBI" id="CHEBI:29035"/>
        <label>1</label>
    </ligand>
</feature>
<feature type="binding site" evidence="1">
    <location>
        <position position="91"/>
    </location>
    <ligand>
        <name>Mn(2+)</name>
        <dbReference type="ChEBI" id="CHEBI:29035"/>
        <label>2</label>
    </ligand>
</feature>
<feature type="binding site" evidence="1">
    <location>
        <position position="92"/>
    </location>
    <ligand>
        <name>Mn(2+)</name>
        <dbReference type="ChEBI" id="CHEBI:29035"/>
        <label>1</label>
    </ligand>
</feature>
<feature type="binding site" evidence="1">
    <location>
        <position position="236"/>
    </location>
    <ligand>
        <name>Mn(2+)</name>
        <dbReference type="ChEBI" id="CHEBI:29035"/>
        <label>2</label>
    </ligand>
</feature>